<protein>
    <recommendedName>
        <fullName evidence="1">4-hydroxybenzoate octaprenyltransferase</fullName>
        <ecNumber evidence="1">2.5.1.39</ecNumber>
    </recommendedName>
    <alternativeName>
        <fullName evidence="1">4-HB polyprenyltransferase</fullName>
    </alternativeName>
</protein>
<keyword id="KW-0997">Cell inner membrane</keyword>
<keyword id="KW-1003">Cell membrane</keyword>
<keyword id="KW-0460">Magnesium</keyword>
<keyword id="KW-0472">Membrane</keyword>
<keyword id="KW-1185">Reference proteome</keyword>
<keyword id="KW-0808">Transferase</keyword>
<keyword id="KW-0812">Transmembrane</keyword>
<keyword id="KW-1133">Transmembrane helix</keyword>
<keyword id="KW-0831">Ubiquinone biosynthesis</keyword>
<organism>
    <name type="scientific">Escherichia coli O6:H1 (strain CFT073 / ATCC 700928 / UPEC)</name>
    <dbReference type="NCBI Taxonomy" id="199310"/>
    <lineage>
        <taxon>Bacteria</taxon>
        <taxon>Pseudomonadati</taxon>
        <taxon>Pseudomonadota</taxon>
        <taxon>Gammaproteobacteria</taxon>
        <taxon>Enterobacterales</taxon>
        <taxon>Enterobacteriaceae</taxon>
        <taxon>Escherichia</taxon>
    </lineage>
</organism>
<evidence type="ECO:0000255" key="1">
    <source>
        <dbReference type="HAMAP-Rule" id="MF_01635"/>
    </source>
</evidence>
<name>UBIA_ECOL6</name>
<accession>P0AGK2</accession>
<accession>P26601</accession>
<comment type="function">
    <text evidence="1">Catalyzes the prenylation of para-hydroxybenzoate (PHB) with an all-trans polyprenyl group. Mediates the second step in the final reaction sequence of ubiquinone-8 (UQ-8) biosynthesis, which is the condensation of the polyisoprenoid side chain with PHB, generating the first membrane-bound Q intermediate 3-octaprenyl-4-hydroxybenzoate.</text>
</comment>
<comment type="catalytic activity">
    <reaction evidence="1">
        <text>all-trans-octaprenyl diphosphate + 4-hydroxybenzoate = 4-hydroxy-3-(all-trans-octaprenyl)benzoate + diphosphate</text>
        <dbReference type="Rhea" id="RHEA:27782"/>
        <dbReference type="ChEBI" id="CHEBI:1617"/>
        <dbReference type="ChEBI" id="CHEBI:17879"/>
        <dbReference type="ChEBI" id="CHEBI:33019"/>
        <dbReference type="ChEBI" id="CHEBI:57711"/>
        <dbReference type="EC" id="2.5.1.39"/>
    </reaction>
</comment>
<comment type="cofactor">
    <cofactor evidence="1">
        <name>Mg(2+)</name>
        <dbReference type="ChEBI" id="CHEBI:18420"/>
    </cofactor>
</comment>
<comment type="pathway">
    <text evidence="1">Cofactor biosynthesis; ubiquinone biosynthesis.</text>
</comment>
<comment type="subcellular location">
    <subcellularLocation>
        <location evidence="1">Cell inner membrane</location>
        <topology evidence="1">Multi-pass membrane protein</topology>
    </subcellularLocation>
</comment>
<comment type="similarity">
    <text evidence="1">Belongs to the UbiA prenyltransferase family.</text>
</comment>
<gene>
    <name evidence="1" type="primary">ubiA</name>
    <name type="ordered locus">c5010</name>
</gene>
<dbReference type="EC" id="2.5.1.39" evidence="1"/>
<dbReference type="EMBL" id="AE014075">
    <property type="protein sequence ID" value="AAN83436.1"/>
    <property type="molecule type" value="Genomic_DNA"/>
</dbReference>
<dbReference type="RefSeq" id="WP_000455227.1">
    <property type="nucleotide sequence ID" value="NZ_CP051263.1"/>
</dbReference>
<dbReference type="SMR" id="P0AGK2"/>
<dbReference type="STRING" id="199310.c5010"/>
<dbReference type="GeneID" id="93777791"/>
<dbReference type="KEGG" id="ecc:c5010"/>
<dbReference type="eggNOG" id="COG0382">
    <property type="taxonomic scope" value="Bacteria"/>
</dbReference>
<dbReference type="HOGENOM" id="CLU_034879_1_0_6"/>
<dbReference type="BioCyc" id="ECOL199310:C5010-MONOMER"/>
<dbReference type="UniPathway" id="UPA00232"/>
<dbReference type="Proteomes" id="UP000001410">
    <property type="component" value="Chromosome"/>
</dbReference>
<dbReference type="GO" id="GO:0005886">
    <property type="term" value="C:plasma membrane"/>
    <property type="evidence" value="ECO:0007669"/>
    <property type="project" value="UniProtKB-SubCell"/>
</dbReference>
<dbReference type="GO" id="GO:0008412">
    <property type="term" value="F:4-hydroxybenzoate polyprenyltransferase activity"/>
    <property type="evidence" value="ECO:0007669"/>
    <property type="project" value="UniProtKB-UniRule"/>
</dbReference>
<dbReference type="GO" id="GO:0006744">
    <property type="term" value="P:ubiquinone biosynthetic process"/>
    <property type="evidence" value="ECO:0007669"/>
    <property type="project" value="UniProtKB-UniRule"/>
</dbReference>
<dbReference type="CDD" id="cd13959">
    <property type="entry name" value="PT_UbiA_COQ2"/>
    <property type="match status" value="1"/>
</dbReference>
<dbReference type="FunFam" id="1.10.357.140:FF:000002">
    <property type="entry name" value="4-hydroxybenzoate octaprenyltransferase"/>
    <property type="match status" value="1"/>
</dbReference>
<dbReference type="FunFam" id="1.20.120.1780:FF:000001">
    <property type="entry name" value="4-hydroxybenzoate octaprenyltransferase"/>
    <property type="match status" value="1"/>
</dbReference>
<dbReference type="Gene3D" id="1.10.357.140">
    <property type="entry name" value="UbiA prenyltransferase"/>
    <property type="match status" value="1"/>
</dbReference>
<dbReference type="Gene3D" id="1.20.120.1780">
    <property type="entry name" value="UbiA prenyltransferase"/>
    <property type="match status" value="1"/>
</dbReference>
<dbReference type="HAMAP" id="MF_01635">
    <property type="entry name" value="UbiA"/>
    <property type="match status" value="1"/>
</dbReference>
<dbReference type="InterPro" id="IPR006370">
    <property type="entry name" value="HB_polyprenyltransferase-like"/>
</dbReference>
<dbReference type="InterPro" id="IPR039653">
    <property type="entry name" value="Prenyltransferase"/>
</dbReference>
<dbReference type="InterPro" id="IPR000537">
    <property type="entry name" value="UbiA_prenyltransferase"/>
</dbReference>
<dbReference type="InterPro" id="IPR030470">
    <property type="entry name" value="UbiA_prenylTrfase_CS"/>
</dbReference>
<dbReference type="InterPro" id="IPR044878">
    <property type="entry name" value="UbiA_sf"/>
</dbReference>
<dbReference type="NCBIfam" id="TIGR01474">
    <property type="entry name" value="ubiA_proteo"/>
    <property type="match status" value="1"/>
</dbReference>
<dbReference type="PANTHER" id="PTHR11048:SF28">
    <property type="entry name" value="4-HYDROXYBENZOATE POLYPRENYLTRANSFERASE, MITOCHONDRIAL"/>
    <property type="match status" value="1"/>
</dbReference>
<dbReference type="PANTHER" id="PTHR11048">
    <property type="entry name" value="PRENYLTRANSFERASES"/>
    <property type="match status" value="1"/>
</dbReference>
<dbReference type="Pfam" id="PF01040">
    <property type="entry name" value="UbiA"/>
    <property type="match status" value="1"/>
</dbReference>
<dbReference type="PROSITE" id="PS00943">
    <property type="entry name" value="UBIA"/>
    <property type="match status" value="1"/>
</dbReference>
<reference key="1">
    <citation type="journal article" date="2002" name="Proc. Natl. Acad. Sci. U.S.A.">
        <title>Extensive mosaic structure revealed by the complete genome sequence of uropathogenic Escherichia coli.</title>
        <authorList>
            <person name="Welch R.A."/>
            <person name="Burland V."/>
            <person name="Plunkett G. III"/>
            <person name="Redford P."/>
            <person name="Roesch P."/>
            <person name="Rasko D."/>
            <person name="Buckles E.L."/>
            <person name="Liou S.-R."/>
            <person name="Boutin A."/>
            <person name="Hackett J."/>
            <person name="Stroud D."/>
            <person name="Mayhew G.F."/>
            <person name="Rose D.J."/>
            <person name="Zhou S."/>
            <person name="Schwartz D.C."/>
            <person name="Perna N.T."/>
            <person name="Mobley H.L.T."/>
            <person name="Donnenberg M.S."/>
            <person name="Blattner F.R."/>
        </authorList>
    </citation>
    <scope>NUCLEOTIDE SEQUENCE [LARGE SCALE GENOMIC DNA]</scope>
    <source>
        <strain>CFT073 / ATCC 700928 / UPEC</strain>
    </source>
</reference>
<sequence>MEWSLTQNKLLAFHRLMRTDKPIGALLLLWPTLWALWVATPGVPQLWILAVFVAGVWLMRAAGCVVNDYADRKFDGHVKRTANRPLPSGAVTEKEARALFVVLVLISFLLVLTLNTMTILLSIAALALAWVYPFMKRYTHLPQVVLGAAFGWSIPMAFAAVSESVPLSCWLMFLANILWAVAYDTQYAMVDRDDDVKIGIKSTAILFGQYDKLIIGILQIGVLALMAIIGELNGLGWGYYWSILVAGALFVYQQKLIANREREACFKAFMNNNYVGLVLFLGLAMSYWHF</sequence>
<feature type="chain" id="PRO_0000162892" description="4-hydroxybenzoate octaprenyltransferase">
    <location>
        <begin position="1"/>
        <end position="290"/>
    </location>
</feature>
<feature type="transmembrane region" description="Helical" evidence="1">
    <location>
        <begin position="23"/>
        <end position="43"/>
    </location>
</feature>
<feature type="transmembrane region" description="Helical" evidence="1">
    <location>
        <begin position="46"/>
        <end position="66"/>
    </location>
</feature>
<feature type="transmembrane region" description="Helical" evidence="1">
    <location>
        <begin position="99"/>
        <end position="119"/>
    </location>
</feature>
<feature type="transmembrane region" description="Helical" evidence="1">
    <location>
        <begin position="141"/>
        <end position="161"/>
    </location>
</feature>
<feature type="transmembrane region" description="Helical" evidence="1">
    <location>
        <begin position="163"/>
        <end position="183"/>
    </location>
</feature>
<feature type="transmembrane region" description="Helical" evidence="1">
    <location>
        <begin position="213"/>
        <end position="233"/>
    </location>
</feature>
<feature type="transmembrane region" description="Helical" evidence="1">
    <location>
        <begin position="234"/>
        <end position="254"/>
    </location>
</feature>
<feature type="transmembrane region" description="Helical" evidence="1">
    <location>
        <begin position="268"/>
        <end position="288"/>
    </location>
</feature>
<proteinExistence type="inferred from homology"/>